<protein>
    <recommendedName>
        <fullName evidence="1">Ribosomal protein L11 methyltransferase</fullName>
        <shortName evidence="1">L11 Mtase</shortName>
        <ecNumber evidence="1">2.1.1.-</ecNumber>
    </recommendedName>
</protein>
<proteinExistence type="inferred from homology"/>
<gene>
    <name evidence="1" type="primary">prmA</name>
    <name type="ordered locus">NT01EI_3504</name>
</gene>
<sequence length="293" mass="31810">MPWIQIKINSTGGQAETLSDALMENGAVSVTFQDSHDNPVFEPLPGETLLWGDTDVIGLFDAETEMSAVIAELENHPALGAGFRHKIEQIEDKDWEREWMDNFHPMQFGHRLWICPSWREIPEPDAVNVMLDPGLAFGTGTHPTTALCLQWLDGLDLAGKTVIDFGCGSGILAIAALKLGAARAIGIDIDPQAIQASRDNAERNGVSGRLELYLPKDQPADLSADVVVANILAGPLRELAPLIGCLPRQGGLLGLSGILASQAESVCEAYREKFALDPVAEREEWCRITGVHR</sequence>
<name>PRMA_EDWI9</name>
<evidence type="ECO:0000255" key="1">
    <source>
        <dbReference type="HAMAP-Rule" id="MF_00735"/>
    </source>
</evidence>
<organism>
    <name type="scientific">Edwardsiella ictaluri (strain 93-146)</name>
    <dbReference type="NCBI Taxonomy" id="634503"/>
    <lineage>
        <taxon>Bacteria</taxon>
        <taxon>Pseudomonadati</taxon>
        <taxon>Pseudomonadota</taxon>
        <taxon>Gammaproteobacteria</taxon>
        <taxon>Enterobacterales</taxon>
        <taxon>Hafniaceae</taxon>
        <taxon>Edwardsiella</taxon>
    </lineage>
</organism>
<comment type="function">
    <text evidence="1">Methylates ribosomal protein L11.</text>
</comment>
<comment type="catalytic activity">
    <reaction evidence="1">
        <text>L-lysyl-[protein] + 3 S-adenosyl-L-methionine = N(6),N(6),N(6)-trimethyl-L-lysyl-[protein] + 3 S-adenosyl-L-homocysteine + 3 H(+)</text>
        <dbReference type="Rhea" id="RHEA:54192"/>
        <dbReference type="Rhea" id="RHEA-COMP:9752"/>
        <dbReference type="Rhea" id="RHEA-COMP:13826"/>
        <dbReference type="ChEBI" id="CHEBI:15378"/>
        <dbReference type="ChEBI" id="CHEBI:29969"/>
        <dbReference type="ChEBI" id="CHEBI:57856"/>
        <dbReference type="ChEBI" id="CHEBI:59789"/>
        <dbReference type="ChEBI" id="CHEBI:61961"/>
    </reaction>
</comment>
<comment type="subcellular location">
    <subcellularLocation>
        <location evidence="1">Cytoplasm</location>
    </subcellularLocation>
</comment>
<comment type="similarity">
    <text evidence="1">Belongs to the methyltransferase superfamily. PrmA family.</text>
</comment>
<keyword id="KW-0963">Cytoplasm</keyword>
<keyword id="KW-0489">Methyltransferase</keyword>
<keyword id="KW-0949">S-adenosyl-L-methionine</keyword>
<keyword id="KW-0808">Transferase</keyword>
<accession>C5BEW8</accession>
<dbReference type="EC" id="2.1.1.-" evidence="1"/>
<dbReference type="EMBL" id="CP001600">
    <property type="protein sequence ID" value="ACR70640.1"/>
    <property type="molecule type" value="Genomic_DNA"/>
</dbReference>
<dbReference type="RefSeq" id="WP_015872709.1">
    <property type="nucleotide sequence ID" value="NZ_CP169062.1"/>
</dbReference>
<dbReference type="SMR" id="C5BEW8"/>
<dbReference type="STRING" id="67780.B6E78_09140"/>
<dbReference type="GeneID" id="69540349"/>
<dbReference type="KEGG" id="eic:NT01EI_3504"/>
<dbReference type="PATRIC" id="fig|634503.3.peg.3121"/>
<dbReference type="HOGENOM" id="CLU_049382_4_1_6"/>
<dbReference type="OrthoDB" id="9785995at2"/>
<dbReference type="Proteomes" id="UP000001485">
    <property type="component" value="Chromosome"/>
</dbReference>
<dbReference type="GO" id="GO:0005829">
    <property type="term" value="C:cytosol"/>
    <property type="evidence" value="ECO:0007669"/>
    <property type="project" value="TreeGrafter"/>
</dbReference>
<dbReference type="GO" id="GO:0016279">
    <property type="term" value="F:protein-lysine N-methyltransferase activity"/>
    <property type="evidence" value="ECO:0007669"/>
    <property type="project" value="TreeGrafter"/>
</dbReference>
<dbReference type="GO" id="GO:0032259">
    <property type="term" value="P:methylation"/>
    <property type="evidence" value="ECO:0007669"/>
    <property type="project" value="UniProtKB-KW"/>
</dbReference>
<dbReference type="CDD" id="cd02440">
    <property type="entry name" value="AdoMet_MTases"/>
    <property type="match status" value="1"/>
</dbReference>
<dbReference type="Gene3D" id="3.40.50.150">
    <property type="entry name" value="Vaccinia Virus protein VP39"/>
    <property type="match status" value="1"/>
</dbReference>
<dbReference type="HAMAP" id="MF_00735">
    <property type="entry name" value="Methyltr_PrmA"/>
    <property type="match status" value="1"/>
</dbReference>
<dbReference type="InterPro" id="IPR050078">
    <property type="entry name" value="Ribosomal_L11_MeTrfase_PrmA"/>
</dbReference>
<dbReference type="InterPro" id="IPR004498">
    <property type="entry name" value="Ribosomal_PrmA_MeTrfase"/>
</dbReference>
<dbReference type="InterPro" id="IPR029063">
    <property type="entry name" value="SAM-dependent_MTases_sf"/>
</dbReference>
<dbReference type="NCBIfam" id="TIGR00406">
    <property type="entry name" value="prmA"/>
    <property type="match status" value="1"/>
</dbReference>
<dbReference type="PANTHER" id="PTHR43648">
    <property type="entry name" value="ELECTRON TRANSFER FLAVOPROTEIN BETA SUBUNIT LYSINE METHYLTRANSFERASE"/>
    <property type="match status" value="1"/>
</dbReference>
<dbReference type="PANTHER" id="PTHR43648:SF1">
    <property type="entry name" value="ELECTRON TRANSFER FLAVOPROTEIN BETA SUBUNIT LYSINE METHYLTRANSFERASE"/>
    <property type="match status" value="1"/>
</dbReference>
<dbReference type="Pfam" id="PF06325">
    <property type="entry name" value="PrmA"/>
    <property type="match status" value="1"/>
</dbReference>
<dbReference type="PIRSF" id="PIRSF000401">
    <property type="entry name" value="RPL11_MTase"/>
    <property type="match status" value="1"/>
</dbReference>
<dbReference type="SUPFAM" id="SSF53335">
    <property type="entry name" value="S-adenosyl-L-methionine-dependent methyltransferases"/>
    <property type="match status" value="1"/>
</dbReference>
<reference key="1">
    <citation type="submission" date="2009-03" db="EMBL/GenBank/DDBJ databases">
        <title>Complete genome sequence of Edwardsiella ictaluri 93-146.</title>
        <authorList>
            <person name="Williams M.L."/>
            <person name="Gillaspy A.F."/>
            <person name="Dyer D.W."/>
            <person name="Thune R.L."/>
            <person name="Waldbieser G.C."/>
            <person name="Schuster S.C."/>
            <person name="Gipson J."/>
            <person name="Zaitshik J."/>
            <person name="Landry C."/>
            <person name="Lawrence M.L."/>
        </authorList>
    </citation>
    <scope>NUCLEOTIDE SEQUENCE [LARGE SCALE GENOMIC DNA]</scope>
    <source>
        <strain>93-146</strain>
    </source>
</reference>
<feature type="chain" id="PRO_1000212747" description="Ribosomal protein L11 methyltransferase">
    <location>
        <begin position="1"/>
        <end position="293"/>
    </location>
</feature>
<feature type="binding site" evidence="1">
    <location>
        <position position="145"/>
    </location>
    <ligand>
        <name>S-adenosyl-L-methionine</name>
        <dbReference type="ChEBI" id="CHEBI:59789"/>
    </ligand>
</feature>
<feature type="binding site" evidence="1">
    <location>
        <position position="166"/>
    </location>
    <ligand>
        <name>S-adenosyl-L-methionine</name>
        <dbReference type="ChEBI" id="CHEBI:59789"/>
    </ligand>
</feature>
<feature type="binding site" evidence="1">
    <location>
        <position position="188"/>
    </location>
    <ligand>
        <name>S-adenosyl-L-methionine</name>
        <dbReference type="ChEBI" id="CHEBI:59789"/>
    </ligand>
</feature>
<feature type="binding site" evidence="1">
    <location>
        <position position="230"/>
    </location>
    <ligand>
        <name>S-adenosyl-L-methionine</name>
        <dbReference type="ChEBI" id="CHEBI:59789"/>
    </ligand>
</feature>